<organism>
    <name type="scientific">Stenotrophomonas maltophilia (strain K279a)</name>
    <dbReference type="NCBI Taxonomy" id="522373"/>
    <lineage>
        <taxon>Bacteria</taxon>
        <taxon>Pseudomonadati</taxon>
        <taxon>Pseudomonadota</taxon>
        <taxon>Gammaproteobacteria</taxon>
        <taxon>Lysobacterales</taxon>
        <taxon>Lysobacteraceae</taxon>
        <taxon>Stenotrophomonas</taxon>
        <taxon>Stenotrophomonas maltophilia group</taxon>
    </lineage>
</organism>
<accession>B2FUP5</accession>
<feature type="chain" id="PRO_1000140057" description="Multifunctional CCA protein">
    <location>
        <begin position="1"/>
        <end position="406"/>
    </location>
</feature>
<feature type="domain" description="HD" evidence="1">
    <location>
        <begin position="229"/>
        <end position="331"/>
    </location>
</feature>
<feature type="binding site" evidence="1">
    <location>
        <position position="8"/>
    </location>
    <ligand>
        <name>ATP</name>
        <dbReference type="ChEBI" id="CHEBI:30616"/>
    </ligand>
</feature>
<feature type="binding site" evidence="1">
    <location>
        <position position="8"/>
    </location>
    <ligand>
        <name>CTP</name>
        <dbReference type="ChEBI" id="CHEBI:37563"/>
    </ligand>
</feature>
<feature type="binding site" evidence="1">
    <location>
        <position position="11"/>
    </location>
    <ligand>
        <name>ATP</name>
        <dbReference type="ChEBI" id="CHEBI:30616"/>
    </ligand>
</feature>
<feature type="binding site" evidence="1">
    <location>
        <position position="11"/>
    </location>
    <ligand>
        <name>CTP</name>
        <dbReference type="ChEBI" id="CHEBI:37563"/>
    </ligand>
</feature>
<feature type="binding site" evidence="1">
    <location>
        <position position="21"/>
    </location>
    <ligand>
        <name>Mg(2+)</name>
        <dbReference type="ChEBI" id="CHEBI:18420"/>
    </ligand>
</feature>
<feature type="binding site" evidence="1">
    <location>
        <position position="23"/>
    </location>
    <ligand>
        <name>Mg(2+)</name>
        <dbReference type="ChEBI" id="CHEBI:18420"/>
    </ligand>
</feature>
<feature type="binding site" evidence="1">
    <location>
        <position position="91"/>
    </location>
    <ligand>
        <name>ATP</name>
        <dbReference type="ChEBI" id="CHEBI:30616"/>
    </ligand>
</feature>
<feature type="binding site" evidence="1">
    <location>
        <position position="91"/>
    </location>
    <ligand>
        <name>CTP</name>
        <dbReference type="ChEBI" id="CHEBI:37563"/>
    </ligand>
</feature>
<feature type="binding site" evidence="1">
    <location>
        <position position="138"/>
    </location>
    <ligand>
        <name>ATP</name>
        <dbReference type="ChEBI" id="CHEBI:30616"/>
    </ligand>
</feature>
<feature type="binding site" evidence="1">
    <location>
        <position position="138"/>
    </location>
    <ligand>
        <name>CTP</name>
        <dbReference type="ChEBI" id="CHEBI:37563"/>
    </ligand>
</feature>
<feature type="binding site" evidence="1">
    <location>
        <position position="141"/>
    </location>
    <ligand>
        <name>ATP</name>
        <dbReference type="ChEBI" id="CHEBI:30616"/>
    </ligand>
</feature>
<feature type="binding site" evidence="1">
    <location>
        <position position="141"/>
    </location>
    <ligand>
        <name>CTP</name>
        <dbReference type="ChEBI" id="CHEBI:37563"/>
    </ligand>
</feature>
<dbReference type="EC" id="2.7.7.72" evidence="1"/>
<dbReference type="EC" id="3.1.3.-" evidence="1"/>
<dbReference type="EC" id="3.1.4.-" evidence="1"/>
<dbReference type="EMBL" id="AM743169">
    <property type="protein sequence ID" value="CAQ47405.1"/>
    <property type="molecule type" value="Genomic_DNA"/>
</dbReference>
<dbReference type="RefSeq" id="WP_012481263.1">
    <property type="nucleotide sequence ID" value="NC_010943.1"/>
</dbReference>
<dbReference type="SMR" id="B2FUP5"/>
<dbReference type="EnsemblBacteria" id="CAQ47405">
    <property type="protein sequence ID" value="CAQ47405"/>
    <property type="gene ID" value="Smlt4008"/>
</dbReference>
<dbReference type="KEGG" id="sml:Smlt4008"/>
<dbReference type="PATRIC" id="fig|522373.3.peg.3784"/>
<dbReference type="eggNOG" id="COG0617">
    <property type="taxonomic scope" value="Bacteria"/>
</dbReference>
<dbReference type="HOGENOM" id="CLU_015961_1_1_6"/>
<dbReference type="Proteomes" id="UP000008840">
    <property type="component" value="Chromosome"/>
</dbReference>
<dbReference type="GO" id="GO:0005524">
    <property type="term" value="F:ATP binding"/>
    <property type="evidence" value="ECO:0007669"/>
    <property type="project" value="UniProtKB-UniRule"/>
</dbReference>
<dbReference type="GO" id="GO:0004810">
    <property type="term" value="F:CCA tRNA nucleotidyltransferase activity"/>
    <property type="evidence" value="ECO:0007669"/>
    <property type="project" value="UniProtKB-UniRule"/>
</dbReference>
<dbReference type="GO" id="GO:0004112">
    <property type="term" value="F:cyclic-nucleotide phosphodiesterase activity"/>
    <property type="evidence" value="ECO:0007669"/>
    <property type="project" value="UniProtKB-UniRule"/>
</dbReference>
<dbReference type="GO" id="GO:0000287">
    <property type="term" value="F:magnesium ion binding"/>
    <property type="evidence" value="ECO:0007669"/>
    <property type="project" value="UniProtKB-UniRule"/>
</dbReference>
<dbReference type="GO" id="GO:0016791">
    <property type="term" value="F:phosphatase activity"/>
    <property type="evidence" value="ECO:0007669"/>
    <property type="project" value="UniProtKB-UniRule"/>
</dbReference>
<dbReference type="GO" id="GO:0000049">
    <property type="term" value="F:tRNA binding"/>
    <property type="evidence" value="ECO:0007669"/>
    <property type="project" value="UniProtKB-UniRule"/>
</dbReference>
<dbReference type="GO" id="GO:0042245">
    <property type="term" value="P:RNA repair"/>
    <property type="evidence" value="ECO:0007669"/>
    <property type="project" value="UniProtKB-KW"/>
</dbReference>
<dbReference type="GO" id="GO:0001680">
    <property type="term" value="P:tRNA 3'-terminal CCA addition"/>
    <property type="evidence" value="ECO:0007669"/>
    <property type="project" value="UniProtKB-UniRule"/>
</dbReference>
<dbReference type="CDD" id="cd00077">
    <property type="entry name" value="HDc"/>
    <property type="match status" value="1"/>
</dbReference>
<dbReference type="CDD" id="cd05398">
    <property type="entry name" value="NT_ClassII-CCAase"/>
    <property type="match status" value="1"/>
</dbReference>
<dbReference type="Gene3D" id="3.30.460.10">
    <property type="entry name" value="Beta Polymerase, domain 2"/>
    <property type="match status" value="1"/>
</dbReference>
<dbReference type="Gene3D" id="1.10.3090.10">
    <property type="entry name" value="cca-adding enzyme, domain 2"/>
    <property type="match status" value="1"/>
</dbReference>
<dbReference type="HAMAP" id="MF_01261">
    <property type="entry name" value="CCA_bact_type1"/>
    <property type="match status" value="1"/>
</dbReference>
<dbReference type="InterPro" id="IPR012006">
    <property type="entry name" value="CCA_bact"/>
</dbReference>
<dbReference type="InterPro" id="IPR003607">
    <property type="entry name" value="HD/PDEase_dom"/>
</dbReference>
<dbReference type="InterPro" id="IPR006674">
    <property type="entry name" value="HD_domain"/>
</dbReference>
<dbReference type="InterPro" id="IPR043519">
    <property type="entry name" value="NT_sf"/>
</dbReference>
<dbReference type="InterPro" id="IPR002646">
    <property type="entry name" value="PolA_pol_head_dom"/>
</dbReference>
<dbReference type="InterPro" id="IPR032828">
    <property type="entry name" value="PolyA_RNA-bd"/>
</dbReference>
<dbReference type="InterPro" id="IPR050124">
    <property type="entry name" value="tRNA_CCA-adding_enzyme"/>
</dbReference>
<dbReference type="NCBIfam" id="NF008137">
    <property type="entry name" value="PRK10885.1"/>
    <property type="match status" value="1"/>
</dbReference>
<dbReference type="PANTHER" id="PTHR47545">
    <property type="entry name" value="MULTIFUNCTIONAL CCA PROTEIN"/>
    <property type="match status" value="1"/>
</dbReference>
<dbReference type="PANTHER" id="PTHR47545:SF1">
    <property type="entry name" value="MULTIFUNCTIONAL CCA PROTEIN"/>
    <property type="match status" value="1"/>
</dbReference>
<dbReference type="Pfam" id="PF01966">
    <property type="entry name" value="HD"/>
    <property type="match status" value="1"/>
</dbReference>
<dbReference type="Pfam" id="PF01743">
    <property type="entry name" value="PolyA_pol"/>
    <property type="match status" value="1"/>
</dbReference>
<dbReference type="Pfam" id="PF12627">
    <property type="entry name" value="PolyA_pol_RNAbd"/>
    <property type="match status" value="1"/>
</dbReference>
<dbReference type="PIRSF" id="PIRSF000813">
    <property type="entry name" value="CCA_bact"/>
    <property type="match status" value="1"/>
</dbReference>
<dbReference type="SUPFAM" id="SSF81301">
    <property type="entry name" value="Nucleotidyltransferase"/>
    <property type="match status" value="1"/>
</dbReference>
<dbReference type="SUPFAM" id="SSF81891">
    <property type="entry name" value="Poly A polymerase C-terminal region-like"/>
    <property type="match status" value="1"/>
</dbReference>
<dbReference type="PROSITE" id="PS51831">
    <property type="entry name" value="HD"/>
    <property type="match status" value="1"/>
</dbReference>
<gene>
    <name evidence="1" type="primary">cca</name>
    <name type="ordered locus">Smlt4008</name>
</gene>
<evidence type="ECO:0000255" key="1">
    <source>
        <dbReference type="HAMAP-Rule" id="MF_01261"/>
    </source>
</evidence>
<sequence length="406" mass="44944">MKIYLVGGAVRDRLLQRPAGDHDWVVVGATPAQMEAQGYTAVGRDFPVFLHPKTGEEYALARTERKSGRGYRGFVVDADPGVTLEEDLQRRDFTINAIACDEETGTLVDPYGGVRDIEQRVLRHVGPAFVEDPLRVLRAARFMARFAPLGFTVAEETMALMREIAASGELDALVPERVWQELRKALVSERPSAFLRTLHDAHALGPILPELEALYGVPQRAEFHPEVDTGIHQEMVSDMAAKLAPGDDLVGFAALTHDLGKGLTPPEEWPRHIMHEQRGIKPLKALCARLKIPAEHQQLAEAVCREHLNVHRIDELRDATVLELLGRCDALRRPERVARIALCCEADKRGRLGFEDADYPQGETLKRLHQAALSVQARDLDTTHLKGPAIGEALAKARVKAIAAAR</sequence>
<keyword id="KW-0067">ATP-binding</keyword>
<keyword id="KW-0378">Hydrolase</keyword>
<keyword id="KW-0460">Magnesium</keyword>
<keyword id="KW-0479">Metal-binding</keyword>
<keyword id="KW-0511">Multifunctional enzyme</keyword>
<keyword id="KW-0533">Nickel</keyword>
<keyword id="KW-0547">Nucleotide-binding</keyword>
<keyword id="KW-0548">Nucleotidyltransferase</keyword>
<keyword id="KW-1185">Reference proteome</keyword>
<keyword id="KW-0692">RNA repair</keyword>
<keyword id="KW-0694">RNA-binding</keyword>
<keyword id="KW-0808">Transferase</keyword>
<keyword id="KW-0819">tRNA processing</keyword>
<proteinExistence type="inferred from homology"/>
<name>CCA_STRMK</name>
<comment type="function">
    <text evidence="1">Catalyzes the addition and repair of the essential 3'-terminal CCA sequence in tRNAs without using a nucleic acid template. Adds these three nucleotides in the order of C, C, and A to the tRNA nucleotide-73, using CTP and ATP as substrates and producing inorganic pyrophosphate. tRNA 3'-terminal CCA addition is required both for tRNA processing and repair. Also involved in tRNA surveillance by mediating tandem CCA addition to generate a CCACCA at the 3' terminus of unstable tRNAs. While stable tRNAs receive only 3'-terminal CCA, unstable tRNAs are marked with CCACCA and rapidly degraded.</text>
</comment>
<comment type="catalytic activity">
    <reaction evidence="1">
        <text>a tRNA precursor + 2 CTP + ATP = a tRNA with a 3' CCA end + 3 diphosphate</text>
        <dbReference type="Rhea" id="RHEA:14433"/>
        <dbReference type="Rhea" id="RHEA-COMP:10465"/>
        <dbReference type="Rhea" id="RHEA-COMP:10468"/>
        <dbReference type="ChEBI" id="CHEBI:30616"/>
        <dbReference type="ChEBI" id="CHEBI:33019"/>
        <dbReference type="ChEBI" id="CHEBI:37563"/>
        <dbReference type="ChEBI" id="CHEBI:74896"/>
        <dbReference type="ChEBI" id="CHEBI:83071"/>
        <dbReference type="EC" id="2.7.7.72"/>
    </reaction>
</comment>
<comment type="catalytic activity">
    <reaction evidence="1">
        <text>a tRNA with a 3' CCA end + 2 CTP + ATP = a tRNA with a 3' CCACCA end + 3 diphosphate</text>
        <dbReference type="Rhea" id="RHEA:76235"/>
        <dbReference type="Rhea" id="RHEA-COMP:10468"/>
        <dbReference type="Rhea" id="RHEA-COMP:18655"/>
        <dbReference type="ChEBI" id="CHEBI:30616"/>
        <dbReference type="ChEBI" id="CHEBI:33019"/>
        <dbReference type="ChEBI" id="CHEBI:37563"/>
        <dbReference type="ChEBI" id="CHEBI:83071"/>
        <dbReference type="ChEBI" id="CHEBI:195187"/>
    </reaction>
    <physiologicalReaction direction="left-to-right" evidence="1">
        <dbReference type="Rhea" id="RHEA:76236"/>
    </physiologicalReaction>
</comment>
<comment type="cofactor">
    <cofactor evidence="1">
        <name>Mg(2+)</name>
        <dbReference type="ChEBI" id="CHEBI:18420"/>
    </cofactor>
    <text evidence="1">Magnesium is required for nucleotidyltransferase activity.</text>
</comment>
<comment type="cofactor">
    <cofactor evidence="1">
        <name>Ni(2+)</name>
        <dbReference type="ChEBI" id="CHEBI:49786"/>
    </cofactor>
    <text evidence="1">Nickel for phosphatase activity.</text>
</comment>
<comment type="subunit">
    <text evidence="1">Monomer. Can also form homodimers and oligomers.</text>
</comment>
<comment type="domain">
    <text evidence="1">Comprises two domains: an N-terminal domain containing the nucleotidyltransferase activity and a C-terminal HD domain associated with both phosphodiesterase and phosphatase activities.</text>
</comment>
<comment type="miscellaneous">
    <text evidence="1">A single active site specifically recognizes both ATP and CTP and is responsible for their addition.</text>
</comment>
<comment type="similarity">
    <text evidence="1">Belongs to the tRNA nucleotidyltransferase/poly(A) polymerase family. Bacterial CCA-adding enzyme type 1 subfamily.</text>
</comment>
<protein>
    <recommendedName>
        <fullName evidence="1">Multifunctional CCA protein</fullName>
    </recommendedName>
    <domain>
        <recommendedName>
            <fullName evidence="1">CCA-adding enzyme</fullName>
            <ecNumber evidence="1">2.7.7.72</ecNumber>
        </recommendedName>
        <alternativeName>
            <fullName evidence="1">CCA tRNA nucleotidyltransferase</fullName>
        </alternativeName>
        <alternativeName>
            <fullName evidence="1">tRNA CCA-pyrophosphorylase</fullName>
        </alternativeName>
        <alternativeName>
            <fullName evidence="1">tRNA adenylyl-/cytidylyl-transferase</fullName>
        </alternativeName>
        <alternativeName>
            <fullName evidence="1">tRNA nucleotidyltransferase</fullName>
        </alternativeName>
        <alternativeName>
            <fullName evidence="1">tRNA-NT</fullName>
        </alternativeName>
    </domain>
    <domain>
        <recommendedName>
            <fullName evidence="1">2'-nucleotidase</fullName>
            <ecNumber evidence="1">3.1.3.-</ecNumber>
        </recommendedName>
    </domain>
    <domain>
        <recommendedName>
            <fullName evidence="1">2',3'-cyclic phosphodiesterase</fullName>
            <ecNumber evidence="1">3.1.4.-</ecNumber>
        </recommendedName>
    </domain>
    <domain>
        <recommendedName>
            <fullName evidence="1">Phosphatase</fullName>
            <ecNumber evidence="1">3.1.3.-</ecNumber>
        </recommendedName>
    </domain>
</protein>
<reference key="1">
    <citation type="journal article" date="2008" name="Genome Biol.">
        <title>The complete genome, comparative and functional analysis of Stenotrophomonas maltophilia reveals an organism heavily shielded by drug resistance determinants.</title>
        <authorList>
            <person name="Crossman L.C."/>
            <person name="Gould V.C."/>
            <person name="Dow J.M."/>
            <person name="Vernikos G.S."/>
            <person name="Okazaki A."/>
            <person name="Sebaihia M."/>
            <person name="Saunders D."/>
            <person name="Arrowsmith C."/>
            <person name="Carver T."/>
            <person name="Peters N."/>
            <person name="Adlem E."/>
            <person name="Kerhornou A."/>
            <person name="Lord A."/>
            <person name="Murphy L."/>
            <person name="Seeger K."/>
            <person name="Squares R."/>
            <person name="Rutter S."/>
            <person name="Quail M.A."/>
            <person name="Rajandream M.A."/>
            <person name="Harris D."/>
            <person name="Churcher C."/>
            <person name="Bentley S.D."/>
            <person name="Parkhill J."/>
            <person name="Thomson N.R."/>
            <person name="Avison M.B."/>
        </authorList>
    </citation>
    <scope>NUCLEOTIDE SEQUENCE [LARGE SCALE GENOMIC DNA]</scope>
    <source>
        <strain>K279a</strain>
    </source>
</reference>